<keyword id="KW-0687">Ribonucleoprotein</keyword>
<keyword id="KW-0689">Ribosomal protein</keyword>
<keyword id="KW-0694">RNA-binding</keyword>
<keyword id="KW-0699">rRNA-binding</keyword>
<reference key="1">
    <citation type="journal article" date="2008" name="Genomics">
        <title>Characterization of ST-4821 complex, a unique Neisseria meningitidis clone.</title>
        <authorList>
            <person name="Peng J."/>
            <person name="Yang L."/>
            <person name="Yang F."/>
            <person name="Yang J."/>
            <person name="Yan Y."/>
            <person name="Nie H."/>
            <person name="Zhang X."/>
            <person name="Xiong Z."/>
            <person name="Jiang Y."/>
            <person name="Cheng F."/>
            <person name="Xu X."/>
            <person name="Chen S."/>
            <person name="Sun L."/>
            <person name="Li W."/>
            <person name="Shen Y."/>
            <person name="Shao Z."/>
            <person name="Liang X."/>
            <person name="Xu J."/>
            <person name="Jin Q."/>
        </authorList>
    </citation>
    <scope>NUCLEOTIDE SEQUENCE [LARGE SCALE GENOMIC DNA]</scope>
    <source>
        <strain>053442</strain>
    </source>
</reference>
<evidence type="ECO:0000255" key="1">
    <source>
        <dbReference type="HAMAP-Rule" id="MF_01343"/>
    </source>
</evidence>
<evidence type="ECO:0000305" key="2"/>
<accession>A9M2F1</accession>
<proteinExistence type="inferred from homology"/>
<comment type="function">
    <text evidence="1">One of the primary rRNA binding proteins, it binds directly to 16S rRNA where it helps nucleate assembly of the platform of the 30S subunit by binding and bridging several RNA helices of the 16S rRNA.</text>
</comment>
<comment type="function">
    <text evidence="1">Forms an intersubunit bridge (bridge B4) with the 23S rRNA of the 50S subunit in the ribosome.</text>
</comment>
<comment type="subunit">
    <text evidence="1">Part of the 30S ribosomal subunit. Forms a bridge to the 50S subunit in the 70S ribosome, contacting the 23S rRNA.</text>
</comment>
<comment type="similarity">
    <text evidence="1">Belongs to the universal ribosomal protein uS15 family.</text>
</comment>
<name>RS15_NEIM0</name>
<protein>
    <recommendedName>
        <fullName evidence="1">Small ribosomal subunit protein uS15</fullName>
    </recommendedName>
    <alternativeName>
        <fullName evidence="2">30S ribosomal protein S15</fullName>
    </alternativeName>
</protein>
<sequence length="89" mass="10386">MALTVEQKAQIVKDFQRKEGDTGSSEVQVALLTFRINDLTPHFKANPKDHHSRRGLLKMVSQRRRLLAYLRRTQPDTYRALITRLGLRK</sequence>
<organism>
    <name type="scientific">Neisseria meningitidis serogroup C (strain 053442)</name>
    <dbReference type="NCBI Taxonomy" id="374833"/>
    <lineage>
        <taxon>Bacteria</taxon>
        <taxon>Pseudomonadati</taxon>
        <taxon>Pseudomonadota</taxon>
        <taxon>Betaproteobacteria</taxon>
        <taxon>Neisseriales</taxon>
        <taxon>Neisseriaceae</taxon>
        <taxon>Neisseria</taxon>
    </lineage>
</organism>
<dbReference type="EMBL" id="CP000381">
    <property type="protein sequence ID" value="ABX72755.1"/>
    <property type="molecule type" value="Genomic_DNA"/>
</dbReference>
<dbReference type="RefSeq" id="WP_002217790.1">
    <property type="nucleotide sequence ID" value="NC_010120.1"/>
</dbReference>
<dbReference type="SMR" id="A9M2F1"/>
<dbReference type="GeneID" id="93386561"/>
<dbReference type="KEGG" id="nmn:NMCC_0556"/>
<dbReference type="HOGENOM" id="CLU_148518_0_0_4"/>
<dbReference type="Proteomes" id="UP000001177">
    <property type="component" value="Chromosome"/>
</dbReference>
<dbReference type="GO" id="GO:0022627">
    <property type="term" value="C:cytosolic small ribosomal subunit"/>
    <property type="evidence" value="ECO:0007669"/>
    <property type="project" value="TreeGrafter"/>
</dbReference>
<dbReference type="GO" id="GO:0019843">
    <property type="term" value="F:rRNA binding"/>
    <property type="evidence" value="ECO:0007669"/>
    <property type="project" value="UniProtKB-UniRule"/>
</dbReference>
<dbReference type="GO" id="GO:0003735">
    <property type="term" value="F:structural constituent of ribosome"/>
    <property type="evidence" value="ECO:0007669"/>
    <property type="project" value="InterPro"/>
</dbReference>
<dbReference type="GO" id="GO:0006412">
    <property type="term" value="P:translation"/>
    <property type="evidence" value="ECO:0007669"/>
    <property type="project" value="UniProtKB-UniRule"/>
</dbReference>
<dbReference type="CDD" id="cd00353">
    <property type="entry name" value="Ribosomal_S15p_S13e"/>
    <property type="match status" value="1"/>
</dbReference>
<dbReference type="FunFam" id="1.10.287.10:FF:000002">
    <property type="entry name" value="30S ribosomal protein S15"/>
    <property type="match status" value="1"/>
</dbReference>
<dbReference type="Gene3D" id="6.10.250.3130">
    <property type="match status" value="1"/>
</dbReference>
<dbReference type="Gene3D" id="1.10.287.10">
    <property type="entry name" value="S15/NS1, RNA-binding"/>
    <property type="match status" value="1"/>
</dbReference>
<dbReference type="HAMAP" id="MF_01343_B">
    <property type="entry name" value="Ribosomal_uS15_B"/>
    <property type="match status" value="1"/>
</dbReference>
<dbReference type="InterPro" id="IPR000589">
    <property type="entry name" value="Ribosomal_uS15"/>
</dbReference>
<dbReference type="InterPro" id="IPR005290">
    <property type="entry name" value="Ribosomal_uS15_bac-type"/>
</dbReference>
<dbReference type="InterPro" id="IPR009068">
    <property type="entry name" value="uS15_NS1_RNA-bd_sf"/>
</dbReference>
<dbReference type="NCBIfam" id="TIGR00952">
    <property type="entry name" value="S15_bact"/>
    <property type="match status" value="1"/>
</dbReference>
<dbReference type="PANTHER" id="PTHR23321">
    <property type="entry name" value="RIBOSOMAL PROTEIN S15, BACTERIAL AND ORGANELLAR"/>
    <property type="match status" value="1"/>
</dbReference>
<dbReference type="PANTHER" id="PTHR23321:SF26">
    <property type="entry name" value="SMALL RIBOSOMAL SUBUNIT PROTEIN US15M"/>
    <property type="match status" value="1"/>
</dbReference>
<dbReference type="Pfam" id="PF00312">
    <property type="entry name" value="Ribosomal_S15"/>
    <property type="match status" value="1"/>
</dbReference>
<dbReference type="SMART" id="SM01387">
    <property type="entry name" value="Ribosomal_S15"/>
    <property type="match status" value="1"/>
</dbReference>
<dbReference type="SUPFAM" id="SSF47060">
    <property type="entry name" value="S15/NS1 RNA-binding domain"/>
    <property type="match status" value="1"/>
</dbReference>
<dbReference type="PROSITE" id="PS00362">
    <property type="entry name" value="RIBOSOMAL_S15"/>
    <property type="match status" value="1"/>
</dbReference>
<feature type="chain" id="PRO_1000086809" description="Small ribosomal subunit protein uS15">
    <location>
        <begin position="1"/>
        <end position="89"/>
    </location>
</feature>
<gene>
    <name evidence="1" type="primary">rpsO</name>
    <name type="ordered locus">NMCC_0556</name>
</gene>